<feature type="chain" id="PRO_0000241631" description="Large ribosomal subunit protein uL24">
    <location>
        <begin position="1"/>
        <end position="105"/>
    </location>
</feature>
<gene>
    <name evidence="1" type="primary">rplX</name>
    <name type="ordered locus">Saro_1260</name>
</gene>
<accession>Q2G8W9</accession>
<evidence type="ECO:0000255" key="1">
    <source>
        <dbReference type="HAMAP-Rule" id="MF_01326"/>
    </source>
</evidence>
<evidence type="ECO:0000305" key="2"/>
<keyword id="KW-1185">Reference proteome</keyword>
<keyword id="KW-0687">Ribonucleoprotein</keyword>
<keyword id="KW-0689">Ribosomal protein</keyword>
<keyword id="KW-0694">RNA-binding</keyword>
<keyword id="KW-0699">rRNA-binding</keyword>
<name>RL24_NOVAD</name>
<dbReference type="EMBL" id="CP000248">
    <property type="protein sequence ID" value="ABD25704.1"/>
    <property type="molecule type" value="Genomic_DNA"/>
</dbReference>
<dbReference type="RefSeq" id="WP_011444918.1">
    <property type="nucleotide sequence ID" value="NC_007794.1"/>
</dbReference>
<dbReference type="SMR" id="Q2G8W9"/>
<dbReference type="STRING" id="279238.Saro_1260"/>
<dbReference type="KEGG" id="nar:Saro_1260"/>
<dbReference type="eggNOG" id="COG0198">
    <property type="taxonomic scope" value="Bacteria"/>
</dbReference>
<dbReference type="HOGENOM" id="CLU_093315_2_2_5"/>
<dbReference type="Proteomes" id="UP000009134">
    <property type="component" value="Chromosome"/>
</dbReference>
<dbReference type="GO" id="GO:1990904">
    <property type="term" value="C:ribonucleoprotein complex"/>
    <property type="evidence" value="ECO:0007669"/>
    <property type="project" value="UniProtKB-KW"/>
</dbReference>
<dbReference type="GO" id="GO:0005840">
    <property type="term" value="C:ribosome"/>
    <property type="evidence" value="ECO:0007669"/>
    <property type="project" value="UniProtKB-KW"/>
</dbReference>
<dbReference type="GO" id="GO:0019843">
    <property type="term" value="F:rRNA binding"/>
    <property type="evidence" value="ECO:0007669"/>
    <property type="project" value="UniProtKB-UniRule"/>
</dbReference>
<dbReference type="GO" id="GO:0003735">
    <property type="term" value="F:structural constituent of ribosome"/>
    <property type="evidence" value="ECO:0007669"/>
    <property type="project" value="InterPro"/>
</dbReference>
<dbReference type="GO" id="GO:0006412">
    <property type="term" value="P:translation"/>
    <property type="evidence" value="ECO:0007669"/>
    <property type="project" value="UniProtKB-UniRule"/>
</dbReference>
<dbReference type="CDD" id="cd06089">
    <property type="entry name" value="KOW_RPL26"/>
    <property type="match status" value="1"/>
</dbReference>
<dbReference type="FunFam" id="2.30.30.30:FF:000004">
    <property type="entry name" value="50S ribosomal protein L24"/>
    <property type="match status" value="1"/>
</dbReference>
<dbReference type="Gene3D" id="2.30.30.30">
    <property type="match status" value="1"/>
</dbReference>
<dbReference type="HAMAP" id="MF_01326_B">
    <property type="entry name" value="Ribosomal_uL24_B"/>
    <property type="match status" value="1"/>
</dbReference>
<dbReference type="InterPro" id="IPR005824">
    <property type="entry name" value="KOW"/>
</dbReference>
<dbReference type="InterPro" id="IPR014722">
    <property type="entry name" value="Rib_uL2_dom2"/>
</dbReference>
<dbReference type="InterPro" id="IPR003256">
    <property type="entry name" value="Ribosomal_uL24"/>
</dbReference>
<dbReference type="InterPro" id="IPR041988">
    <property type="entry name" value="Ribosomal_uL24_KOW"/>
</dbReference>
<dbReference type="InterPro" id="IPR008991">
    <property type="entry name" value="Translation_prot_SH3-like_sf"/>
</dbReference>
<dbReference type="NCBIfam" id="TIGR01079">
    <property type="entry name" value="rplX_bact"/>
    <property type="match status" value="1"/>
</dbReference>
<dbReference type="PANTHER" id="PTHR12903">
    <property type="entry name" value="MITOCHONDRIAL RIBOSOMAL PROTEIN L24"/>
    <property type="match status" value="1"/>
</dbReference>
<dbReference type="Pfam" id="PF00467">
    <property type="entry name" value="KOW"/>
    <property type="match status" value="1"/>
</dbReference>
<dbReference type="Pfam" id="PF17136">
    <property type="entry name" value="ribosomal_L24"/>
    <property type="match status" value="1"/>
</dbReference>
<dbReference type="SMART" id="SM00739">
    <property type="entry name" value="KOW"/>
    <property type="match status" value="1"/>
</dbReference>
<dbReference type="SUPFAM" id="SSF50104">
    <property type="entry name" value="Translation proteins SH3-like domain"/>
    <property type="match status" value="1"/>
</dbReference>
<comment type="function">
    <text evidence="1">One of two assembly initiator proteins, it binds directly to the 5'-end of the 23S rRNA, where it nucleates assembly of the 50S subunit.</text>
</comment>
<comment type="function">
    <text evidence="1">One of the proteins that surrounds the polypeptide exit tunnel on the outside of the subunit.</text>
</comment>
<comment type="subunit">
    <text evidence="1">Part of the 50S ribosomal subunit.</text>
</comment>
<comment type="similarity">
    <text evidence="1">Belongs to the universal ribosomal protein uL24 family.</text>
</comment>
<reference key="1">
    <citation type="submission" date="2006-01" db="EMBL/GenBank/DDBJ databases">
        <title>Complete sequence of Novosphingobium aromaticivorans DSM 12444.</title>
        <authorList>
            <consortium name="US DOE Joint Genome Institute"/>
            <person name="Copeland A."/>
            <person name="Lucas S."/>
            <person name="Lapidus A."/>
            <person name="Barry K."/>
            <person name="Detter J.C."/>
            <person name="Glavina T."/>
            <person name="Hammon N."/>
            <person name="Israni S."/>
            <person name="Pitluck S."/>
            <person name="Chain P."/>
            <person name="Malfatti S."/>
            <person name="Shin M."/>
            <person name="Vergez L."/>
            <person name="Schmutz J."/>
            <person name="Larimer F."/>
            <person name="Land M."/>
            <person name="Kyrpides N."/>
            <person name="Ivanova N."/>
            <person name="Fredrickson J."/>
            <person name="Balkwill D."/>
            <person name="Romine M.F."/>
            <person name="Richardson P."/>
        </authorList>
    </citation>
    <scope>NUCLEOTIDE SEQUENCE [LARGE SCALE GENOMIC DNA]</scope>
    <source>
        <strain>ATCC 700278 / DSM 12444 / CCUG 56034 / CIP 105152 / NBRC 16084 / F199</strain>
    </source>
</reference>
<protein>
    <recommendedName>
        <fullName evidence="1">Large ribosomal subunit protein uL24</fullName>
    </recommendedName>
    <alternativeName>
        <fullName evidence="2">50S ribosomal protein L24</fullName>
    </alternativeName>
</protein>
<proteinExistence type="inferred from homology"/>
<organism>
    <name type="scientific">Novosphingobium aromaticivorans (strain ATCC 700278 / DSM 12444 / CCUG 56034 / CIP 105152 / NBRC 16084 / F199)</name>
    <dbReference type="NCBI Taxonomy" id="279238"/>
    <lineage>
        <taxon>Bacteria</taxon>
        <taxon>Pseudomonadati</taxon>
        <taxon>Pseudomonadota</taxon>
        <taxon>Alphaproteobacteria</taxon>
        <taxon>Sphingomonadales</taxon>
        <taxon>Sphingomonadaceae</taxon>
        <taxon>Novosphingobium</taxon>
    </lineage>
</organism>
<sequence length="105" mass="11298">MAAAKIKKGDTVVVRSGKDKGRSGTVLQVLPKDEKVVVQGVNIAARHRKPSQQNPQGGIDRFEAPLHISKVSVADKDGKPTRVRFETKDGKKVRVAVKSGETIDG</sequence>